<organism>
    <name type="scientific">Caenorhabditis elegans</name>
    <dbReference type="NCBI Taxonomy" id="6239"/>
    <lineage>
        <taxon>Eukaryota</taxon>
        <taxon>Metazoa</taxon>
        <taxon>Ecdysozoa</taxon>
        <taxon>Nematoda</taxon>
        <taxon>Chromadorea</taxon>
        <taxon>Rhabditida</taxon>
        <taxon>Rhabditina</taxon>
        <taxon>Rhabditomorpha</taxon>
        <taxon>Rhabditoidea</taxon>
        <taxon>Rhabditidae</taxon>
        <taxon>Peloderinae</taxon>
        <taxon>Caenorhabditis</taxon>
    </lineage>
</organism>
<dbReference type="EMBL" id="AF338767">
    <property type="protein sequence ID" value="AAL15621.1"/>
    <property type="molecule type" value="mRNA"/>
</dbReference>
<dbReference type="EMBL" id="BX284605">
    <property type="protein sequence ID" value="CCD74262.1"/>
    <property type="molecule type" value="Genomic_DNA"/>
</dbReference>
<dbReference type="PIR" id="T29644">
    <property type="entry name" value="T29644"/>
</dbReference>
<dbReference type="SMR" id="Q23064"/>
<dbReference type="BioGRID" id="44079">
    <property type="interactions" value="35"/>
</dbReference>
<dbReference type="ComplexPortal" id="CPX-1385">
    <property type="entry name" value="unc-83-unc-84 LINC complex"/>
</dbReference>
<dbReference type="FunCoup" id="Q23064">
    <property type="interactions" value="60"/>
</dbReference>
<dbReference type="IntAct" id="Q23064">
    <property type="interactions" value="15"/>
</dbReference>
<dbReference type="STRING" id="6239.W01A11.3a.1"/>
<dbReference type="PaxDb" id="6239-W01A11.3a"/>
<dbReference type="GeneID" id="179033"/>
<dbReference type="KEGG" id="cel:CELE_W01A11.3"/>
<dbReference type="AGR" id="WB:WBGene00006815"/>
<dbReference type="CTD" id="179033"/>
<dbReference type="WormBase" id="W01A11.3a">
    <property type="protein sequence ID" value="CE31077"/>
    <property type="gene ID" value="WBGene00006815"/>
    <property type="gene designation" value="unc-83"/>
</dbReference>
<dbReference type="WormBase" id="W01A11.3b">
    <property type="protein sequence ID" value="CE40370"/>
    <property type="gene ID" value="WBGene00006815"/>
    <property type="gene designation" value="unc-83"/>
</dbReference>
<dbReference type="WormBase" id="W01A11.3c">
    <property type="protein sequence ID" value="CE40371"/>
    <property type="gene ID" value="WBGene00006815"/>
    <property type="gene designation" value="unc-83"/>
</dbReference>
<dbReference type="eggNOG" id="ENOG502SGIJ">
    <property type="taxonomic scope" value="Eukaryota"/>
</dbReference>
<dbReference type="InParanoid" id="Q23064"/>
<dbReference type="OMA" id="MVRIESH"/>
<dbReference type="OrthoDB" id="5805552at2759"/>
<dbReference type="PRO" id="PR:Q23064"/>
<dbReference type="Proteomes" id="UP000001940">
    <property type="component" value="Chromosome V"/>
</dbReference>
<dbReference type="Bgee" id="WBGene00006815">
    <property type="expression patterns" value="Expressed in pharyngeal muscle cell (C elegans) and 4 other cell types or tissues"/>
</dbReference>
<dbReference type="ExpressionAtlas" id="Q23064">
    <property type="expression patterns" value="baseline and differential"/>
</dbReference>
<dbReference type="GO" id="GO:0034993">
    <property type="term" value="C:meiotic nuclear membrane microtubule tethering complex"/>
    <property type="evidence" value="ECO:0000353"/>
    <property type="project" value="ComplexPortal"/>
</dbReference>
<dbReference type="GO" id="GO:0005635">
    <property type="term" value="C:nuclear envelope"/>
    <property type="evidence" value="ECO:0000314"/>
    <property type="project" value="UniProtKB"/>
</dbReference>
<dbReference type="GO" id="GO:0005640">
    <property type="term" value="C:nuclear outer membrane"/>
    <property type="evidence" value="ECO:0000314"/>
    <property type="project" value="UniProtKB"/>
</dbReference>
<dbReference type="GO" id="GO:0045503">
    <property type="term" value="F:dynein light chain binding"/>
    <property type="evidence" value="ECO:0000353"/>
    <property type="project" value="WormBase"/>
</dbReference>
<dbReference type="GO" id="GO:0018991">
    <property type="term" value="P:egg-laying behavior"/>
    <property type="evidence" value="ECO:0000315"/>
    <property type="project" value="WormBase"/>
</dbReference>
<dbReference type="GO" id="GO:0040011">
    <property type="term" value="P:locomotion"/>
    <property type="evidence" value="ECO:0000315"/>
    <property type="project" value="WormBase"/>
</dbReference>
<dbReference type="GO" id="GO:0007399">
    <property type="term" value="P:nervous system development"/>
    <property type="evidence" value="ECO:0000315"/>
    <property type="project" value="WormBase"/>
</dbReference>
<dbReference type="GO" id="GO:0007097">
    <property type="term" value="P:nuclear migration"/>
    <property type="evidence" value="ECO:0000315"/>
    <property type="project" value="WormBase"/>
</dbReference>
<dbReference type="GO" id="GO:0030473">
    <property type="term" value="P:nuclear migration along microtubule"/>
    <property type="evidence" value="ECO:0000315"/>
    <property type="project" value="UniProtKB"/>
</dbReference>
<dbReference type="GO" id="GO:0009791">
    <property type="term" value="P:post-embryonic development"/>
    <property type="evidence" value="ECO:0000315"/>
    <property type="project" value="WormBase"/>
</dbReference>
<dbReference type="GO" id="GO:0090435">
    <property type="term" value="P:protein localization to nuclear envelope"/>
    <property type="evidence" value="ECO:0000315"/>
    <property type="project" value="UniProtKB"/>
</dbReference>
<dbReference type="GO" id="GO:0030334">
    <property type="term" value="P:regulation of cell migration"/>
    <property type="evidence" value="ECO:0000304"/>
    <property type="project" value="WormBase"/>
</dbReference>
<dbReference type="GO" id="GO:0040025">
    <property type="term" value="P:vulval development"/>
    <property type="evidence" value="ECO:0000315"/>
    <property type="project" value="WormBase"/>
</dbReference>
<feature type="chain" id="PRO_0000065721" description="Nuclear migration protein unc-83">
    <location>
        <begin position="1"/>
        <end position="1041"/>
    </location>
</feature>
<feature type="transmembrane region" description="Helical; Anchor for type IV membrane protein" evidence="1">
    <location>
        <begin position="1005"/>
        <end position="1024"/>
    </location>
</feature>
<feature type="domain" description="KASH" evidence="2">
    <location>
        <begin position="986"/>
        <end position="1041"/>
    </location>
</feature>
<feature type="region of interest" description="Disordered" evidence="3">
    <location>
        <begin position="258"/>
        <end position="283"/>
    </location>
</feature>
<feature type="region of interest" description="Disordered" evidence="3">
    <location>
        <begin position="453"/>
        <end position="498"/>
    </location>
</feature>
<feature type="region of interest" description="Disordered" evidence="3">
    <location>
        <begin position="613"/>
        <end position="646"/>
    </location>
</feature>
<feature type="coiled-coil region" evidence="1">
    <location>
        <begin position="785"/>
        <end position="816"/>
    </location>
</feature>
<feature type="coiled-coil region" evidence="1">
    <location>
        <begin position="931"/>
        <end position="951"/>
    </location>
</feature>
<feature type="compositionally biased region" description="Basic residues" evidence="3">
    <location>
        <begin position="456"/>
        <end position="465"/>
    </location>
</feature>
<feature type="compositionally biased region" description="Basic and acidic residues" evidence="3">
    <location>
        <begin position="613"/>
        <end position="626"/>
    </location>
</feature>
<feature type="mutagenesis site" description="Does not localize to the nuclear envelope of hyp7 hypodermal precursor cells." evidence="5">
    <location>
        <begin position="1025"/>
        <end position="1041"/>
    </location>
</feature>
<feature type="mutagenesis site" description="Localizes normally to the nuclear envelope of hyp7 hypodermal precursor cells and interacts with unc-84, however hyp7 hypodermal precursor cells exhibit failed nuclear migration." evidence="5">
    <original>Y</original>
    <variation>A</variation>
    <location>
        <position position="1034"/>
    </location>
</feature>
<feature type="mutagenesis site" description="Localizes normally to the nuclear envelope of hyp7 hypodermal precursor cells, however hyp7 hypodermal precursor cells exhibit failed nuclear migration." evidence="5">
    <original>PP</original>
    <variation>AA</variation>
    <location>
        <begin position="1038"/>
        <end position="1039"/>
    </location>
</feature>
<feature type="mutagenesis site" description="Localizes normally to the nuclear envelope of hyp7 hypodermal precursor cells, however hyp7 hypodermal precursor cells exhibit failed nuclear migration. Rescues the nuclear migration defect in hyp7 hypodermal precursor cells in the null mutant." evidence="5">
    <original>P</original>
    <variation>A</variation>
    <location>
        <position position="1038"/>
    </location>
</feature>
<feature type="mutagenesis site" description="Localizes normally to the nuclear envelope of hyp7 hypodermal precursor cells, however hyp7 hypodermal precursor cells exhibit failed nuclear migration. Rescues the nuclear migration defect in hyp7 hypodermal precursor cells in the null mutant." evidence="5">
    <original>P</original>
    <variation>A</variation>
    <location>
        <position position="1039"/>
    </location>
</feature>
<feature type="mutagenesis site" description="Localizes normally to the nuclear envelope of hyp7 hypodermal precursor cells and interacts with unc-84, however hyp7 hypodermal precursor cells exhibit failed nuclear migration. Rescues the nuclear migration defect in hyp7 hypodermal precursor cells in the null mutant." evidence="5">
    <original>P</original>
    <variation>A</variation>
    <location>
        <position position="1040"/>
    </location>
</feature>
<comment type="function">
    <text evidence="4 5 6 7 8 9 10">Cargo-specific adapter that is involved in nuclear migration during development and thereafter (PubMed:11748140, PubMed:19605495, PubMed:20005871, PubMed:20921138, PubMed:27697906). Component of the unc-83-unc-84 LINC (LInker of Nucleoskeleton and Cytoskeleton) complex where it interacts with unc-84 to form a bridge connecting the nuclear envelope to the cytoskeleton which allows for nuclear transport along microtubules (PubMed:11748140, PubMed:16481402, PubMed:25023515). Within the complex, connects the nuclear envelope to the microtubule cytoskeleton through the kinesin-1 light chain protein klc-2 (most likely within the Kinesin 1 motor complex) to regulate nuclear migrations (PubMed:19605495, PubMed:20921138). Moreover, within the complex, also recruits the large microtubule-associated bicd-1-dlc-1-egal-1 and lis-1-nud-2 complexes to the nuclear envelope to regulate both the bidirectional migration of nuclei and the extent of nuclear migrations (PubMed:20005871). Not required for centrosome attachment to the nucleus (PubMed:11748140).</text>
</comment>
<comment type="subunit">
    <text evidence="4 5 6 7">Component of the unc-83-unc-84 LINC complex which contains at least unc-83 and unc-84 (PubMed:11748140, PubMed:16481402). Within the unc-83-unc-84 LINC complex interacts with unc-84 (via C-terminus); the interaction is probably required to recruit unc-83 to the nuclear envelope where it then recruits dynein and kinesin-1 complexes to regulate nuclear migration (PubMed:11748140, PubMed:16481402). Interacts with bicd-1 and dlc-1 (PubMed:20005871). Interacts with nud-2 (via C-terminus); the interaction is direct, and is required for recruitment of nud-2 to the nuclear envelope (PubMed:20005871). Interacts with klc-2; the interaction is direct (PubMed:19605495).</text>
</comment>
<comment type="subcellular location">
    <subcellularLocation>
        <location evidence="4 6 7 10 13">Nucleus membrane</location>
        <topology evidence="12">Single-pass type IV membrane protein</topology>
    </subcellularLocation>
    <subcellularLocation>
        <location evidence="5">Nucleus outer membrane</location>
        <topology evidence="12">Single-pass type IV membrane protein</topology>
    </subcellularLocation>
    <text evidence="4">The transmembrane domain associates with the nuclear envelope (PubMed:11748140). Co-localizes with unc-84 and lmn-1 at the nuclear envelope (PubMed:11748140).</text>
</comment>
<comment type="tissue specificity">
    <text evidence="4">Predominantly expressed in migratory nuclei (PubMed:11748140). Expressed in a variety of cell-types, including cells around the pharynx and in the uterus (PubMed:11748140).</text>
</comment>
<comment type="developmental stage">
    <text evidence="4">Expressed in embryos and adults (PubMed:11748140). First expressed at the nuclear envelope of migrating hyp7 nuclei, then, at the bean embryonic stage, it is expressed in hyp7 cells, P cells and intestinal cells (PubMed:11748140).</text>
</comment>
<comment type="domain">
    <text evidence="5">The KASH domain, which contains a transmembrane domain, mediates nuclear envelope targeting.</text>
</comment>
<comment type="disruption phenotype">
    <text evidence="4 5 6 7 8">Viable, but with failed nuclear migrations in hyp7 hypodermal precursor cells (PubMed:11748140, PubMed:16481402, PubMed:19605495, PubMed:20005871, PubMed:20921138). Hyp7 nuclei are mislocalized to the dorsal cord of L1 stage larvae (PubMed:19605495).</text>
</comment>
<sequence>MDVMDSFSEVEMPNDISSEDHLLKVIESSAEEVDIFLENCSSLYNLILDSLHNLTSKTISCECLDEMTSTLEKSAKKILAERPEAENSVLLRLNTICCAMDQLRVQHNSRMMSGADSDTASSARSSTSSSTGEMRLWLHEVERRLEINEKRIRVEPNLQLLLSDQQALQLEIQHEGQLLVNRLNKQIKDDHDSDSSEEEKRKTCVDAIRKRWHTIYLNSLSLVCRIEELINHQQASEDSESDPDLVGPPIKRARIRTVGHLTASDTEESEADEEDRHSQTETVVTEDDNVLPFAENEYESIMDGRVTVDSCTSSSEDQMVEQSTNKKWESVLQDVGYSSGENSIHEALNTCADHLVPETSDMRRKRIECSPVKAFYRTVQLEDMSDLEVTKAINHDVEEEPNLSDSMYVNHDSTFLATQNLPEYDEVMALMDDDDLPMDMSMTESFNTKWREIHGQKKPLRRASRPSREQMNLIAKSSCDASSEDSSEGENQTNLEDDPEMMSVSFNSAQFDTSSPLKRQRSARGLKNASFLYDSLEMDGSFCSTRSEMLPPCKTRSLARRKLRVRRMPRSMSDGEQLGVVSSKPEGMMTPMIRVSPPSTPVRRLLRKLDEQIRNRDSDTAPEHSDAAQAYEWDEYNPPQKDDSISDRHIQTMTDISDQLMNIDDDFAEHFGTSSAIRLIEESKSHLRVVLKALEESDSNIPQLSNFELIARSNLRQVDEALKIQSGNQPSFLETSTLQDLRSEWANLYESIRSPFARIMHQVKKFAATLQEVSSMASLGDVDIRSKEDVAKTLDAVTAIERRLSSERQELRDLLASSSFRDVAKDLSCEFESVSEGYDDAVDKIGKMAHSLSQVKGEWDAWNSRQNDIRNAMVRIESHLKEGQMDNKMIADEMELCQERMNSLETMCNYLTASLGSIQNESNSKNLPDFKAELSIYSNALARLKDRFNDMIRVPTPPTVQFHPPEPLPSLARSMTTQTAEMESETENEPLTIAEAISSSRLIKFTFALSLLAALAAIFYYHVFGKPFGPHVTYVNGPPPV</sequence>
<evidence type="ECO:0000255" key="1"/>
<evidence type="ECO:0000255" key="2">
    <source>
        <dbReference type="PROSITE-ProRule" id="PRU00385"/>
    </source>
</evidence>
<evidence type="ECO:0000256" key="3">
    <source>
        <dbReference type="SAM" id="MobiDB-lite"/>
    </source>
</evidence>
<evidence type="ECO:0000269" key="4">
    <source>
    </source>
</evidence>
<evidence type="ECO:0000269" key="5">
    <source>
    </source>
</evidence>
<evidence type="ECO:0000269" key="6">
    <source>
    </source>
</evidence>
<evidence type="ECO:0000269" key="7">
    <source>
    </source>
</evidence>
<evidence type="ECO:0000269" key="8">
    <source>
    </source>
</evidence>
<evidence type="ECO:0000269" key="9">
    <source>
    </source>
</evidence>
<evidence type="ECO:0000269" key="10">
    <source>
    </source>
</evidence>
<evidence type="ECO:0000303" key="11">
    <source>
    </source>
</evidence>
<evidence type="ECO:0000305" key="12"/>
<evidence type="ECO:0000305" key="13">
    <source>
    </source>
</evidence>
<evidence type="ECO:0000312" key="14">
    <source>
        <dbReference type="WormBase" id="W01A11.3a"/>
    </source>
</evidence>
<gene>
    <name evidence="11 14" type="primary">unc-83</name>
    <name evidence="14" type="ORF">W01A11.3</name>
</gene>
<accession>Q23064</accession>
<accession>Q95WB6</accession>
<proteinExistence type="evidence at protein level"/>
<protein>
    <recommendedName>
        <fullName>Nuclear migration protein unc-83</fullName>
    </recommendedName>
    <alternativeName>
        <fullName>Uncoordinated protein 83</fullName>
    </alternativeName>
</protein>
<name>UNC83_CAEEL</name>
<reference key="1">
    <citation type="journal article" date="2001" name="Development">
        <title>unc-83 encodes a novel component of the nuclear envelope and is essential for proper nuclear migration.</title>
        <authorList>
            <person name="Starr D.A."/>
            <person name="Hermann G.J."/>
            <person name="Malone C.J."/>
            <person name="Fixsen W."/>
            <person name="Priess J.R."/>
            <person name="Horvitz H.R."/>
            <person name="Han M."/>
        </authorList>
    </citation>
    <scope>NUCLEOTIDE SEQUENCE [MRNA]</scope>
    <scope>FUNCTION</scope>
    <scope>CHARACTERIZATION</scope>
    <scope>INTERACTION WITH UNC-84</scope>
    <source>
        <strain>Bristol N2</strain>
    </source>
</reference>
<reference key="2">
    <citation type="journal article" date="1998" name="Science">
        <title>Genome sequence of the nematode C. elegans: a platform for investigating biology.</title>
        <authorList>
            <consortium name="The C. elegans sequencing consortium"/>
        </authorList>
    </citation>
    <scope>NUCLEOTIDE SEQUENCE [LARGE SCALE GENOMIC DNA]</scope>
    <source>
        <strain>Bristol N2</strain>
    </source>
</reference>
<reference key="3">
    <citation type="journal article" date="2006" name="Mol. Biol. Cell">
        <title>UNC-83 IS a KASH protein required for nuclear migration and is recruited to the outer nuclear membrane by a physical interaction with the SUN protein UNC-84.</title>
        <authorList>
            <person name="McGee M.D."/>
            <person name="Rillo R."/>
            <person name="Anderson A.S."/>
            <person name="Starr D.A."/>
        </authorList>
    </citation>
    <scope>FUNCTION</scope>
    <scope>INTERACTION WITH UNC-84</scope>
    <scope>SUBCELLULAR LOCATION</scope>
    <scope>DOMAIN</scope>
    <scope>DISRUPTION PHENOTYPE</scope>
    <scope>MUTAGENESIS OF 1025-GLY--VAL-1041; TYR-1034; 1038-PRO-PRO-1039; PRO-1038; PRO-1039 AND PRO-1040</scope>
</reference>
<reference key="4">
    <citation type="journal article" date="2009" name="Development">
        <title>UNC-83 is a nuclear-specific cargo adaptor for kinesin-1-mediated nuclear migration.</title>
        <authorList>
            <person name="Meyerzon M."/>
            <person name="Fridolfsson H.N."/>
            <person name="Ly N."/>
            <person name="McNally F.J."/>
            <person name="Starr D.A."/>
        </authorList>
    </citation>
    <scope>FUNCTION</scope>
    <scope>INTERACTION WITH KLC-2</scope>
    <scope>SUBCELLULAR LOCATION</scope>
    <scope>DISRUPTION PHENOTYPE</scope>
</reference>
<reference key="5">
    <citation type="journal article" date="2010" name="Dev. Biol.">
        <title>UNC-83 coordinates kinesin-1 and dynein activities at the nuclear envelope during nuclear migration.</title>
        <authorList>
            <person name="Fridolfsson H.N."/>
            <person name="Ly N."/>
            <person name="Meyerzon M."/>
            <person name="Starr D.A."/>
        </authorList>
    </citation>
    <scope>FUNCTION</scope>
    <scope>INTERACTION WITH BICD-1; DLC-1 AND NUD-2</scope>
    <scope>SUBUNIT</scope>
    <scope>SUBCELLULAR LOCATION</scope>
    <scope>DISRUPTION PHENOTYPE</scope>
</reference>
<reference key="6">
    <citation type="journal article" date="2010" name="J. Cell Biol.">
        <title>Kinesin-1 and dynein at the nuclear envelope mediate the bidirectional migrations of nuclei.</title>
        <authorList>
            <person name="Fridolfsson H.N."/>
            <person name="Starr D.A."/>
        </authorList>
    </citation>
    <scope>FUNCTION</scope>
    <scope>DISRUPTION PHENOTYPE</scope>
</reference>
<reference key="7">
    <citation type="journal article" date="2011" name="Mol. Biol. Cell">
        <title>Multiple mechanisms actively target the SUN protein UNC-84 to the inner nuclear membrane.</title>
        <authorList>
            <person name="Tapley E.C."/>
            <person name="Ly N."/>
            <person name="Starr D.A."/>
        </authorList>
    </citation>
    <scope>SUBCELLULAR LOCATION</scope>
</reference>
<reference key="8">
    <citation type="journal article" date="2014" name="J. Cell Biol.">
        <title>The SUN protein UNC-84 is required only in force-bearing cells to maintain nuclear envelope architecture.</title>
        <authorList>
            <person name="Cain N.E."/>
            <person name="Tapley E.C."/>
            <person name="McDonald K.L."/>
            <person name="Cain B.M."/>
            <person name="Starr D.A."/>
        </authorList>
    </citation>
    <scope>FUNCTION</scope>
</reference>
<reference key="9">
    <citation type="journal article" date="2016" name="Development">
        <title>Nuclei migrate through constricted spaces using microtubule motors and actin networks in C. elegans hypodermal cells.</title>
        <authorList>
            <person name="Bone C.R."/>
            <person name="Chang Y.T."/>
            <person name="Cain N.E."/>
            <person name="Murphy S.P."/>
            <person name="Starr D.A."/>
        </authorList>
    </citation>
    <scope>FUNCTION</scope>
    <scope>SUBCELLULAR LOCATION</scope>
</reference>
<keyword id="KW-0175">Coiled coil</keyword>
<keyword id="KW-0217">Developmental protein</keyword>
<keyword id="KW-0472">Membrane</keyword>
<keyword id="KW-0539">Nucleus</keyword>
<keyword id="KW-1185">Reference proteome</keyword>
<keyword id="KW-0812">Transmembrane</keyword>
<keyword id="KW-1133">Transmembrane helix</keyword>